<sequence length="147" mass="16839">MNNILVINGPNLNLLGKREPDMYGNITLENINQKIKLHFKNEDLKIDFFQSNEEGKIIDKIIESQKKYNAIVINPAAYSHYSIAILDAMRSINIPAVEVHLSNIYKREEYRKKSVTAEASLGVISGFGYYGYIMAIEFILNNLVREK</sequence>
<evidence type="ECO:0000255" key="1">
    <source>
        <dbReference type="HAMAP-Rule" id="MF_00169"/>
    </source>
</evidence>
<proteinExistence type="inferred from homology"/>
<reference key="1">
    <citation type="submission" date="2008-05" db="EMBL/GenBank/DDBJ databases">
        <title>Genome sequence of Clostridium botulinum Ba4 strain 657.</title>
        <authorList>
            <person name="Shrivastava S."/>
            <person name="Brown J.L."/>
            <person name="Bruce D."/>
            <person name="Detter C."/>
            <person name="Munk C."/>
            <person name="Smith L.A."/>
            <person name="Smith T.J."/>
            <person name="Sutton G."/>
            <person name="Brettin T.S."/>
        </authorList>
    </citation>
    <scope>NUCLEOTIDE SEQUENCE [LARGE SCALE GENOMIC DNA]</scope>
    <source>
        <strain>657 / Type Ba4</strain>
    </source>
</reference>
<feature type="chain" id="PRO_1000203667" description="3-dehydroquinate dehydratase">
    <location>
        <begin position="1"/>
        <end position="147"/>
    </location>
</feature>
<feature type="active site" description="Proton acceptor" evidence="1">
    <location>
        <position position="23"/>
    </location>
</feature>
<feature type="active site" description="Proton donor" evidence="1">
    <location>
        <position position="100"/>
    </location>
</feature>
<feature type="binding site" evidence="1">
    <location>
        <position position="74"/>
    </location>
    <ligand>
        <name>substrate</name>
    </ligand>
</feature>
<feature type="binding site" evidence="1">
    <location>
        <position position="80"/>
    </location>
    <ligand>
        <name>substrate</name>
    </ligand>
</feature>
<feature type="binding site" evidence="1">
    <location>
        <position position="87"/>
    </location>
    <ligand>
        <name>substrate</name>
    </ligand>
</feature>
<feature type="binding site" evidence="1">
    <location>
        <begin position="101"/>
        <end position="102"/>
    </location>
    <ligand>
        <name>substrate</name>
    </ligand>
</feature>
<feature type="binding site" evidence="1">
    <location>
        <position position="111"/>
    </location>
    <ligand>
        <name>substrate</name>
    </ligand>
</feature>
<feature type="site" description="Transition state stabilizer" evidence="1">
    <location>
        <position position="18"/>
    </location>
</feature>
<protein>
    <recommendedName>
        <fullName evidence="1">3-dehydroquinate dehydratase</fullName>
        <shortName evidence="1">3-dehydroquinase</shortName>
        <ecNumber evidence="1">4.2.1.10</ecNumber>
    </recommendedName>
    <alternativeName>
        <fullName evidence="1">Type II DHQase</fullName>
    </alternativeName>
</protein>
<accession>C3KXD9</accession>
<name>AROQ_CLOB6</name>
<gene>
    <name evidence="1" type="primary">aroQ</name>
    <name type="ordered locus">CLJ_B2085</name>
</gene>
<dbReference type="EC" id="4.2.1.10" evidence="1"/>
<dbReference type="EMBL" id="CP001083">
    <property type="protein sequence ID" value="ACQ52321.1"/>
    <property type="molecule type" value="Genomic_DNA"/>
</dbReference>
<dbReference type="RefSeq" id="WP_003362526.1">
    <property type="nucleotide sequence ID" value="NC_012658.1"/>
</dbReference>
<dbReference type="SMR" id="C3KXD9"/>
<dbReference type="KEGG" id="cbi:CLJ_B2085"/>
<dbReference type="HOGENOM" id="CLU_090968_1_0_9"/>
<dbReference type="UniPathway" id="UPA00053">
    <property type="reaction ID" value="UER00086"/>
</dbReference>
<dbReference type="Proteomes" id="UP000002333">
    <property type="component" value="Chromosome"/>
</dbReference>
<dbReference type="GO" id="GO:0003855">
    <property type="term" value="F:3-dehydroquinate dehydratase activity"/>
    <property type="evidence" value="ECO:0007669"/>
    <property type="project" value="UniProtKB-UniRule"/>
</dbReference>
<dbReference type="GO" id="GO:0008652">
    <property type="term" value="P:amino acid biosynthetic process"/>
    <property type="evidence" value="ECO:0007669"/>
    <property type="project" value="UniProtKB-KW"/>
</dbReference>
<dbReference type="GO" id="GO:0009073">
    <property type="term" value="P:aromatic amino acid family biosynthetic process"/>
    <property type="evidence" value="ECO:0007669"/>
    <property type="project" value="UniProtKB-KW"/>
</dbReference>
<dbReference type="GO" id="GO:0009423">
    <property type="term" value="P:chorismate biosynthetic process"/>
    <property type="evidence" value="ECO:0007669"/>
    <property type="project" value="UniProtKB-UniRule"/>
</dbReference>
<dbReference type="GO" id="GO:0019631">
    <property type="term" value="P:quinate catabolic process"/>
    <property type="evidence" value="ECO:0007669"/>
    <property type="project" value="TreeGrafter"/>
</dbReference>
<dbReference type="CDD" id="cd00466">
    <property type="entry name" value="DHQase_II"/>
    <property type="match status" value="1"/>
</dbReference>
<dbReference type="Gene3D" id="3.40.50.9100">
    <property type="entry name" value="Dehydroquinase, class II"/>
    <property type="match status" value="1"/>
</dbReference>
<dbReference type="HAMAP" id="MF_00169">
    <property type="entry name" value="AroQ"/>
    <property type="match status" value="1"/>
</dbReference>
<dbReference type="InterPro" id="IPR001874">
    <property type="entry name" value="DHquinase_II"/>
</dbReference>
<dbReference type="InterPro" id="IPR018509">
    <property type="entry name" value="DHquinase_II_CS"/>
</dbReference>
<dbReference type="InterPro" id="IPR036441">
    <property type="entry name" value="DHquinase_II_sf"/>
</dbReference>
<dbReference type="NCBIfam" id="TIGR01088">
    <property type="entry name" value="aroQ"/>
    <property type="match status" value="1"/>
</dbReference>
<dbReference type="NCBIfam" id="NF003805">
    <property type="entry name" value="PRK05395.1-2"/>
    <property type="match status" value="1"/>
</dbReference>
<dbReference type="NCBIfam" id="NF003806">
    <property type="entry name" value="PRK05395.1-3"/>
    <property type="match status" value="1"/>
</dbReference>
<dbReference type="NCBIfam" id="NF003807">
    <property type="entry name" value="PRK05395.1-4"/>
    <property type="match status" value="1"/>
</dbReference>
<dbReference type="PANTHER" id="PTHR21272">
    <property type="entry name" value="CATABOLIC 3-DEHYDROQUINASE"/>
    <property type="match status" value="1"/>
</dbReference>
<dbReference type="PANTHER" id="PTHR21272:SF3">
    <property type="entry name" value="CATABOLIC 3-DEHYDROQUINASE"/>
    <property type="match status" value="1"/>
</dbReference>
<dbReference type="Pfam" id="PF01220">
    <property type="entry name" value="DHquinase_II"/>
    <property type="match status" value="1"/>
</dbReference>
<dbReference type="PIRSF" id="PIRSF001399">
    <property type="entry name" value="DHquinase_II"/>
    <property type="match status" value="1"/>
</dbReference>
<dbReference type="SUPFAM" id="SSF52304">
    <property type="entry name" value="Type II 3-dehydroquinate dehydratase"/>
    <property type="match status" value="1"/>
</dbReference>
<dbReference type="PROSITE" id="PS01029">
    <property type="entry name" value="DEHYDROQUINASE_II"/>
    <property type="match status" value="1"/>
</dbReference>
<comment type="function">
    <text evidence="1">Catalyzes a trans-dehydration via an enolate intermediate.</text>
</comment>
<comment type="catalytic activity">
    <reaction evidence="1">
        <text>3-dehydroquinate = 3-dehydroshikimate + H2O</text>
        <dbReference type="Rhea" id="RHEA:21096"/>
        <dbReference type="ChEBI" id="CHEBI:15377"/>
        <dbReference type="ChEBI" id="CHEBI:16630"/>
        <dbReference type="ChEBI" id="CHEBI:32364"/>
        <dbReference type="EC" id="4.2.1.10"/>
    </reaction>
</comment>
<comment type="pathway">
    <text evidence="1">Metabolic intermediate biosynthesis; chorismate biosynthesis; chorismate from D-erythrose 4-phosphate and phosphoenolpyruvate: step 3/7.</text>
</comment>
<comment type="subunit">
    <text evidence="1">Homododecamer.</text>
</comment>
<comment type="similarity">
    <text evidence="1">Belongs to the type-II 3-dehydroquinase family.</text>
</comment>
<keyword id="KW-0028">Amino-acid biosynthesis</keyword>
<keyword id="KW-0057">Aromatic amino acid biosynthesis</keyword>
<keyword id="KW-0456">Lyase</keyword>
<organism>
    <name type="scientific">Clostridium botulinum (strain 657 / Type Ba4)</name>
    <dbReference type="NCBI Taxonomy" id="515621"/>
    <lineage>
        <taxon>Bacteria</taxon>
        <taxon>Bacillati</taxon>
        <taxon>Bacillota</taxon>
        <taxon>Clostridia</taxon>
        <taxon>Eubacteriales</taxon>
        <taxon>Clostridiaceae</taxon>
        <taxon>Clostridium</taxon>
    </lineage>
</organism>